<accession>A8AP21</accession>
<comment type="function">
    <text evidence="1">Catalyzes the 2'-O-methylation at nucleotide C2498 in 23S rRNA.</text>
</comment>
<comment type="catalytic activity">
    <reaction evidence="1">
        <text>cytidine(2498) in 23S rRNA + S-adenosyl-L-methionine = 2'-O-methylcytidine(2498) in 23S rRNA + S-adenosyl-L-homocysteine + H(+)</text>
        <dbReference type="Rhea" id="RHEA:42788"/>
        <dbReference type="Rhea" id="RHEA-COMP:10244"/>
        <dbReference type="Rhea" id="RHEA-COMP:10245"/>
        <dbReference type="ChEBI" id="CHEBI:15378"/>
        <dbReference type="ChEBI" id="CHEBI:57856"/>
        <dbReference type="ChEBI" id="CHEBI:59789"/>
        <dbReference type="ChEBI" id="CHEBI:74495"/>
        <dbReference type="ChEBI" id="CHEBI:82748"/>
        <dbReference type="EC" id="2.1.1.186"/>
    </reaction>
</comment>
<comment type="subunit">
    <text evidence="1">Monomer.</text>
</comment>
<comment type="subcellular location">
    <subcellularLocation>
        <location evidence="1">Cytoplasm</location>
    </subcellularLocation>
</comment>
<comment type="similarity">
    <text evidence="1">Belongs to the class I-like SAM-binding methyltransferase superfamily. RNA methyltransferase RlmE family. RlmM subfamily.</text>
</comment>
<keyword id="KW-0963">Cytoplasm</keyword>
<keyword id="KW-0489">Methyltransferase</keyword>
<keyword id="KW-1185">Reference proteome</keyword>
<keyword id="KW-0698">rRNA processing</keyword>
<keyword id="KW-0949">S-adenosyl-L-methionine</keyword>
<keyword id="KW-0808">Transferase</keyword>
<protein>
    <recommendedName>
        <fullName evidence="1">Ribosomal RNA large subunit methyltransferase M</fullName>
        <ecNumber evidence="1">2.1.1.186</ecNumber>
    </recommendedName>
    <alternativeName>
        <fullName evidence="1">23S rRNA (cytidine2498-2'-O)-methyltransferase</fullName>
    </alternativeName>
    <alternativeName>
        <fullName evidence="1">23S rRNA 2'-O-ribose methyltransferase RlmM</fullName>
    </alternativeName>
</protein>
<proteinExistence type="inferred from homology"/>
<dbReference type="EC" id="2.1.1.186" evidence="1"/>
<dbReference type="EMBL" id="CP000822">
    <property type="protein sequence ID" value="ABV15234.1"/>
    <property type="molecule type" value="Genomic_DNA"/>
</dbReference>
<dbReference type="RefSeq" id="WP_012134923.1">
    <property type="nucleotide sequence ID" value="NC_009792.1"/>
</dbReference>
<dbReference type="SMR" id="A8AP21"/>
<dbReference type="STRING" id="290338.CKO_04169"/>
<dbReference type="GeneID" id="45137793"/>
<dbReference type="KEGG" id="cko:CKO_04169"/>
<dbReference type="HOGENOM" id="CLU_043780_0_0_6"/>
<dbReference type="OrthoDB" id="154490at2"/>
<dbReference type="Proteomes" id="UP000008148">
    <property type="component" value="Chromosome"/>
</dbReference>
<dbReference type="GO" id="GO:0005737">
    <property type="term" value="C:cytoplasm"/>
    <property type="evidence" value="ECO:0007669"/>
    <property type="project" value="UniProtKB-SubCell"/>
</dbReference>
<dbReference type="GO" id="GO:0008757">
    <property type="term" value="F:S-adenosylmethionine-dependent methyltransferase activity"/>
    <property type="evidence" value="ECO:0007669"/>
    <property type="project" value="UniProtKB-UniRule"/>
</dbReference>
<dbReference type="GO" id="GO:0032259">
    <property type="term" value="P:methylation"/>
    <property type="evidence" value="ECO:0007669"/>
    <property type="project" value="UniProtKB-KW"/>
</dbReference>
<dbReference type="GO" id="GO:0006364">
    <property type="term" value="P:rRNA processing"/>
    <property type="evidence" value="ECO:0007669"/>
    <property type="project" value="UniProtKB-UniRule"/>
</dbReference>
<dbReference type="FunFam" id="3.30.2300.20:FF:000001">
    <property type="entry name" value="Ribosomal RNA large subunit methyltransferase M"/>
    <property type="match status" value="1"/>
</dbReference>
<dbReference type="FunFam" id="3.40.50.150:FF:000020">
    <property type="entry name" value="Ribosomal RNA large subunit methyltransferase M"/>
    <property type="match status" value="1"/>
</dbReference>
<dbReference type="Gene3D" id="3.30.2300.20">
    <property type="match status" value="1"/>
</dbReference>
<dbReference type="Gene3D" id="3.30.70.2810">
    <property type="match status" value="1"/>
</dbReference>
<dbReference type="Gene3D" id="3.40.50.150">
    <property type="entry name" value="Vaccinia Virus protein VP39"/>
    <property type="match status" value="1"/>
</dbReference>
<dbReference type="HAMAP" id="MF_01551">
    <property type="entry name" value="23SrRNA_methyltr_M"/>
    <property type="match status" value="1"/>
</dbReference>
<dbReference type="InterPro" id="IPR040739">
    <property type="entry name" value="RlmM_FDX"/>
</dbReference>
<dbReference type="InterPro" id="IPR048646">
    <property type="entry name" value="RlmM_THUMP-like"/>
</dbReference>
<dbReference type="InterPro" id="IPR002877">
    <property type="entry name" value="RNA_MeTrfase_FtsJ_dom"/>
</dbReference>
<dbReference type="InterPro" id="IPR011224">
    <property type="entry name" value="rRNA_MeTrfase_M"/>
</dbReference>
<dbReference type="InterPro" id="IPR029063">
    <property type="entry name" value="SAM-dependent_MTases_sf"/>
</dbReference>
<dbReference type="NCBIfam" id="NF008734">
    <property type="entry name" value="PRK11760.1"/>
    <property type="match status" value="1"/>
</dbReference>
<dbReference type="PANTHER" id="PTHR37524">
    <property type="entry name" value="RIBOSOMAL RNA LARGE SUBUNIT METHYLTRANSFERASE M"/>
    <property type="match status" value="1"/>
</dbReference>
<dbReference type="PANTHER" id="PTHR37524:SF2">
    <property type="entry name" value="RIBOSOMAL RNA METHYLTRANSFERASE FTSJ DOMAIN-CONTAINING PROTEIN"/>
    <property type="match status" value="1"/>
</dbReference>
<dbReference type="Pfam" id="PF01728">
    <property type="entry name" value="FtsJ"/>
    <property type="match status" value="1"/>
</dbReference>
<dbReference type="Pfam" id="PF18125">
    <property type="entry name" value="RlmM_FDX"/>
    <property type="match status" value="1"/>
</dbReference>
<dbReference type="Pfam" id="PF21239">
    <property type="entry name" value="RLMM_N"/>
    <property type="match status" value="1"/>
</dbReference>
<dbReference type="PIRSF" id="PIRSF028774">
    <property type="entry name" value="UCP028774"/>
    <property type="match status" value="1"/>
</dbReference>
<dbReference type="SUPFAM" id="SSF53335">
    <property type="entry name" value="S-adenosyl-L-methionine-dependent methyltransferases"/>
    <property type="match status" value="1"/>
</dbReference>
<feature type="chain" id="PRO_0000314511" description="Ribosomal RNA large subunit methyltransferase M">
    <location>
        <begin position="1"/>
        <end position="366"/>
    </location>
</feature>
<feature type="active site" description="Proton acceptor" evidence="1">
    <location>
        <position position="306"/>
    </location>
</feature>
<feature type="binding site" evidence="1">
    <location>
        <position position="188"/>
    </location>
    <ligand>
        <name>S-adenosyl-L-methionine</name>
        <dbReference type="ChEBI" id="CHEBI:59789"/>
    </ligand>
</feature>
<feature type="binding site" evidence="1">
    <location>
        <begin position="221"/>
        <end position="224"/>
    </location>
    <ligand>
        <name>S-adenosyl-L-methionine</name>
        <dbReference type="ChEBI" id="CHEBI:59789"/>
    </ligand>
</feature>
<feature type="binding site" evidence="1">
    <location>
        <position position="240"/>
    </location>
    <ligand>
        <name>S-adenosyl-L-methionine</name>
        <dbReference type="ChEBI" id="CHEBI:59789"/>
    </ligand>
</feature>
<feature type="binding site" evidence="1">
    <location>
        <position position="260"/>
    </location>
    <ligand>
        <name>S-adenosyl-L-methionine</name>
        <dbReference type="ChEBI" id="CHEBI:59789"/>
    </ligand>
</feature>
<feature type="binding site" evidence="1">
    <location>
        <position position="277"/>
    </location>
    <ligand>
        <name>S-adenosyl-L-methionine</name>
        <dbReference type="ChEBI" id="CHEBI:59789"/>
    </ligand>
</feature>
<gene>
    <name evidence="1" type="primary">rlmM</name>
    <name type="ordered locus">CKO_04169</name>
</gene>
<reference key="1">
    <citation type="submission" date="2007-08" db="EMBL/GenBank/DDBJ databases">
        <authorList>
            <consortium name="The Citrobacter koseri Genome Sequencing Project"/>
            <person name="McClelland M."/>
            <person name="Sanderson E.K."/>
            <person name="Porwollik S."/>
            <person name="Spieth J."/>
            <person name="Clifton W.S."/>
            <person name="Latreille P."/>
            <person name="Courtney L."/>
            <person name="Wang C."/>
            <person name="Pepin K."/>
            <person name="Bhonagiri V."/>
            <person name="Nash W."/>
            <person name="Johnson M."/>
            <person name="Thiruvilangam P."/>
            <person name="Wilson R."/>
        </authorList>
    </citation>
    <scope>NUCLEOTIDE SEQUENCE [LARGE SCALE GENOMIC DNA]</scope>
    <source>
        <strain>ATCC BAA-895 / CDC 4225-83 / SGSC4696</strain>
    </source>
</reference>
<name>RLMM_CITK8</name>
<evidence type="ECO:0000255" key="1">
    <source>
        <dbReference type="HAMAP-Rule" id="MF_01551"/>
    </source>
</evidence>
<sequence>MNKVVLLCRPGFEKECAAEITDKAARREIFGFARVKDNAGYVVFECYQPDDAEKIVKELPFSSLIFARQMFVVGELLRDLPPDDRITPIVGMLQGVVEKGGELRVEVADTNESKELMKFCRKFTVPLRAALRDAGILTNYETPKRPVVHVFFIAPGCCYTGYSYPDNNSPFYMGIPRLKFPADAPSRSTLKLEEALHVFIPADEWDERLANGMYAVDLGACPGGWTYQLVKRNMWVYSVDNGPMAQSLMDTGQVTWLREDGFRYRPNRNNISWMVCDMVEKPAKVAALMAQWLVNGWCRETIFNLKLPMKKRYEEVSQNLAYIQAQLDEHGINAQIQARQLYHDREEVTVHVRRLWAAVGGRRDER</sequence>
<organism>
    <name type="scientific">Citrobacter koseri (strain ATCC BAA-895 / CDC 4225-83 / SGSC4696)</name>
    <dbReference type="NCBI Taxonomy" id="290338"/>
    <lineage>
        <taxon>Bacteria</taxon>
        <taxon>Pseudomonadati</taxon>
        <taxon>Pseudomonadota</taxon>
        <taxon>Gammaproteobacteria</taxon>
        <taxon>Enterobacterales</taxon>
        <taxon>Enterobacteriaceae</taxon>
        <taxon>Citrobacter</taxon>
    </lineage>
</organism>